<evidence type="ECO:0000255" key="1">
    <source>
        <dbReference type="HAMAP-Rule" id="MF_00384"/>
    </source>
</evidence>
<keyword id="KW-0028">Amino-acid biosynthesis</keyword>
<keyword id="KW-0067">ATP-binding</keyword>
<keyword id="KW-0963">Cytoplasm</keyword>
<keyword id="KW-0418">Kinase</keyword>
<keyword id="KW-0547">Nucleotide-binding</keyword>
<keyword id="KW-0791">Threonine biosynthesis</keyword>
<keyword id="KW-0808">Transferase</keyword>
<comment type="function">
    <text evidence="1">Catalyzes the ATP-dependent phosphorylation of L-homoserine to L-homoserine phosphate.</text>
</comment>
<comment type="catalytic activity">
    <reaction evidence="1">
        <text>L-homoserine + ATP = O-phospho-L-homoserine + ADP + H(+)</text>
        <dbReference type="Rhea" id="RHEA:13985"/>
        <dbReference type="ChEBI" id="CHEBI:15378"/>
        <dbReference type="ChEBI" id="CHEBI:30616"/>
        <dbReference type="ChEBI" id="CHEBI:57476"/>
        <dbReference type="ChEBI" id="CHEBI:57590"/>
        <dbReference type="ChEBI" id="CHEBI:456216"/>
        <dbReference type="EC" id="2.7.1.39"/>
    </reaction>
</comment>
<comment type="pathway">
    <text evidence="1">Amino-acid biosynthesis; L-threonine biosynthesis; L-threonine from L-aspartate: step 4/5.</text>
</comment>
<comment type="subcellular location">
    <subcellularLocation>
        <location evidence="1">Cytoplasm</location>
    </subcellularLocation>
</comment>
<comment type="similarity">
    <text evidence="1">Belongs to the GHMP kinase family. Homoserine kinase subfamily.</text>
</comment>
<organism>
    <name type="scientific">Salmonella typhi</name>
    <dbReference type="NCBI Taxonomy" id="90370"/>
    <lineage>
        <taxon>Bacteria</taxon>
        <taxon>Pseudomonadati</taxon>
        <taxon>Pseudomonadota</taxon>
        <taxon>Gammaproteobacteria</taxon>
        <taxon>Enterobacterales</taxon>
        <taxon>Enterobacteriaceae</taxon>
        <taxon>Salmonella</taxon>
    </lineage>
</organism>
<accession>P65227</accession>
<accession>Q8XGP5</accession>
<dbReference type="EC" id="2.7.1.39" evidence="1"/>
<dbReference type="EMBL" id="AL513382">
    <property type="protein sequence ID" value="CAD01156.1"/>
    <property type="molecule type" value="Genomic_DNA"/>
</dbReference>
<dbReference type="EMBL" id="AE014613">
    <property type="protein sequence ID" value="AAO67737.1"/>
    <property type="molecule type" value="Genomic_DNA"/>
</dbReference>
<dbReference type="RefSeq" id="NP_454613.1">
    <property type="nucleotide sequence ID" value="NC_003198.1"/>
</dbReference>
<dbReference type="RefSeq" id="WP_000241685.1">
    <property type="nucleotide sequence ID" value="NZ_WSUR01000014.1"/>
</dbReference>
<dbReference type="SMR" id="P65227"/>
<dbReference type="STRING" id="220341.gene:17584058"/>
<dbReference type="KEGG" id="stt:t0003"/>
<dbReference type="KEGG" id="sty:STY0003"/>
<dbReference type="PATRIC" id="fig|220341.7.peg.2"/>
<dbReference type="eggNOG" id="COG0083">
    <property type="taxonomic scope" value="Bacteria"/>
</dbReference>
<dbReference type="HOGENOM" id="CLU_041243_1_1_6"/>
<dbReference type="OMA" id="CANRIPH"/>
<dbReference type="OrthoDB" id="9769912at2"/>
<dbReference type="UniPathway" id="UPA00050">
    <property type="reaction ID" value="UER00064"/>
</dbReference>
<dbReference type="Proteomes" id="UP000000541">
    <property type="component" value="Chromosome"/>
</dbReference>
<dbReference type="Proteomes" id="UP000002670">
    <property type="component" value="Chromosome"/>
</dbReference>
<dbReference type="GO" id="GO:0005737">
    <property type="term" value="C:cytoplasm"/>
    <property type="evidence" value="ECO:0007669"/>
    <property type="project" value="UniProtKB-SubCell"/>
</dbReference>
<dbReference type="GO" id="GO:0005524">
    <property type="term" value="F:ATP binding"/>
    <property type="evidence" value="ECO:0007669"/>
    <property type="project" value="UniProtKB-UniRule"/>
</dbReference>
<dbReference type="GO" id="GO:0004413">
    <property type="term" value="F:homoserine kinase activity"/>
    <property type="evidence" value="ECO:0007669"/>
    <property type="project" value="UniProtKB-UniRule"/>
</dbReference>
<dbReference type="GO" id="GO:0009088">
    <property type="term" value="P:threonine biosynthetic process"/>
    <property type="evidence" value="ECO:0007669"/>
    <property type="project" value="UniProtKB-UniRule"/>
</dbReference>
<dbReference type="FunFam" id="3.30.230.10:FF:000020">
    <property type="entry name" value="Homoserine kinase"/>
    <property type="match status" value="1"/>
</dbReference>
<dbReference type="FunFam" id="3.30.70.890:FF:000002">
    <property type="entry name" value="Homoserine kinase"/>
    <property type="match status" value="1"/>
</dbReference>
<dbReference type="Gene3D" id="3.30.230.10">
    <property type="match status" value="1"/>
</dbReference>
<dbReference type="Gene3D" id="3.30.70.890">
    <property type="entry name" value="GHMP kinase, C-terminal domain"/>
    <property type="match status" value="1"/>
</dbReference>
<dbReference type="HAMAP" id="MF_00384">
    <property type="entry name" value="Homoser_kinase"/>
    <property type="match status" value="1"/>
</dbReference>
<dbReference type="InterPro" id="IPR013750">
    <property type="entry name" value="GHMP_kinase_C_dom"/>
</dbReference>
<dbReference type="InterPro" id="IPR036554">
    <property type="entry name" value="GHMP_kinase_C_sf"/>
</dbReference>
<dbReference type="InterPro" id="IPR006204">
    <property type="entry name" value="GHMP_kinase_N_dom"/>
</dbReference>
<dbReference type="InterPro" id="IPR006203">
    <property type="entry name" value="GHMP_knse_ATP-bd_CS"/>
</dbReference>
<dbReference type="InterPro" id="IPR000870">
    <property type="entry name" value="Homoserine_kinase"/>
</dbReference>
<dbReference type="InterPro" id="IPR020568">
    <property type="entry name" value="Ribosomal_Su5_D2-typ_SF"/>
</dbReference>
<dbReference type="InterPro" id="IPR014721">
    <property type="entry name" value="Ribsml_uS5_D2-typ_fold_subgr"/>
</dbReference>
<dbReference type="NCBIfam" id="NF002288">
    <property type="entry name" value="PRK01212.1-4"/>
    <property type="match status" value="1"/>
</dbReference>
<dbReference type="NCBIfam" id="TIGR00191">
    <property type="entry name" value="thrB"/>
    <property type="match status" value="1"/>
</dbReference>
<dbReference type="PANTHER" id="PTHR20861:SF1">
    <property type="entry name" value="HOMOSERINE KINASE"/>
    <property type="match status" value="1"/>
</dbReference>
<dbReference type="PANTHER" id="PTHR20861">
    <property type="entry name" value="HOMOSERINE/4-DIPHOSPHOCYTIDYL-2-C-METHYL-D-ERYTHRITOL KINASE"/>
    <property type="match status" value="1"/>
</dbReference>
<dbReference type="Pfam" id="PF08544">
    <property type="entry name" value="GHMP_kinases_C"/>
    <property type="match status" value="1"/>
</dbReference>
<dbReference type="Pfam" id="PF00288">
    <property type="entry name" value="GHMP_kinases_N"/>
    <property type="match status" value="1"/>
</dbReference>
<dbReference type="PIRSF" id="PIRSF000676">
    <property type="entry name" value="Homoser_kin"/>
    <property type="match status" value="1"/>
</dbReference>
<dbReference type="PRINTS" id="PR00958">
    <property type="entry name" value="HOMSERKINASE"/>
</dbReference>
<dbReference type="SUPFAM" id="SSF55060">
    <property type="entry name" value="GHMP Kinase, C-terminal domain"/>
    <property type="match status" value="1"/>
</dbReference>
<dbReference type="SUPFAM" id="SSF54211">
    <property type="entry name" value="Ribosomal protein S5 domain 2-like"/>
    <property type="match status" value="1"/>
</dbReference>
<dbReference type="PROSITE" id="PS00627">
    <property type="entry name" value="GHMP_KINASES_ATP"/>
    <property type="match status" value="1"/>
</dbReference>
<name>KHSE_SALTI</name>
<protein>
    <recommendedName>
        <fullName evidence="1">Homoserine kinase</fullName>
        <shortName evidence="1">HK</shortName>
        <shortName evidence="1">HSK</shortName>
        <ecNumber evidence="1">2.7.1.39</ecNumber>
    </recommendedName>
</protein>
<proteinExistence type="inferred from homology"/>
<reference key="1">
    <citation type="journal article" date="2001" name="Nature">
        <title>Complete genome sequence of a multiple drug resistant Salmonella enterica serovar Typhi CT18.</title>
        <authorList>
            <person name="Parkhill J."/>
            <person name="Dougan G."/>
            <person name="James K.D."/>
            <person name="Thomson N.R."/>
            <person name="Pickard D."/>
            <person name="Wain J."/>
            <person name="Churcher C.M."/>
            <person name="Mungall K.L."/>
            <person name="Bentley S.D."/>
            <person name="Holden M.T.G."/>
            <person name="Sebaihia M."/>
            <person name="Baker S."/>
            <person name="Basham D."/>
            <person name="Brooks K."/>
            <person name="Chillingworth T."/>
            <person name="Connerton P."/>
            <person name="Cronin A."/>
            <person name="Davis P."/>
            <person name="Davies R.M."/>
            <person name="Dowd L."/>
            <person name="White N."/>
            <person name="Farrar J."/>
            <person name="Feltwell T."/>
            <person name="Hamlin N."/>
            <person name="Haque A."/>
            <person name="Hien T.T."/>
            <person name="Holroyd S."/>
            <person name="Jagels K."/>
            <person name="Krogh A."/>
            <person name="Larsen T.S."/>
            <person name="Leather S."/>
            <person name="Moule S."/>
            <person name="O'Gaora P."/>
            <person name="Parry C."/>
            <person name="Quail M.A."/>
            <person name="Rutherford K.M."/>
            <person name="Simmonds M."/>
            <person name="Skelton J."/>
            <person name="Stevens K."/>
            <person name="Whitehead S."/>
            <person name="Barrell B.G."/>
        </authorList>
    </citation>
    <scope>NUCLEOTIDE SEQUENCE [LARGE SCALE GENOMIC DNA]</scope>
    <source>
        <strain>CT18</strain>
    </source>
</reference>
<reference key="2">
    <citation type="journal article" date="2003" name="J. Bacteriol.">
        <title>Comparative genomics of Salmonella enterica serovar Typhi strains Ty2 and CT18.</title>
        <authorList>
            <person name="Deng W."/>
            <person name="Liou S.-R."/>
            <person name="Plunkett G. III"/>
            <person name="Mayhew G.F."/>
            <person name="Rose D.J."/>
            <person name="Burland V."/>
            <person name="Kodoyianni V."/>
            <person name="Schwartz D.C."/>
            <person name="Blattner F.R."/>
        </authorList>
    </citation>
    <scope>NUCLEOTIDE SEQUENCE [LARGE SCALE GENOMIC DNA]</scope>
    <source>
        <strain>ATCC 700931 / Ty2</strain>
    </source>
</reference>
<feature type="chain" id="PRO_0000156600" description="Homoserine kinase">
    <location>
        <begin position="1"/>
        <end position="309"/>
    </location>
</feature>
<feature type="binding site" evidence="1">
    <location>
        <begin position="91"/>
        <end position="101"/>
    </location>
    <ligand>
        <name>ATP</name>
        <dbReference type="ChEBI" id="CHEBI:30616"/>
    </ligand>
</feature>
<gene>
    <name evidence="1" type="primary">thrB</name>
    <name type="ordered locus">STY0003</name>
    <name type="ordered locus">t0003</name>
</gene>
<sequence length="309" mass="33286">MVKVYAPASSANMSVGFDVLGAAVTPVDGTLLGDVVSVEAADHFRLHNLGRFADKLPPEPRENIVYQCWERFCQALGKTIPVAMTLEKNMPIGSGLGSSACSVVAALVAMNEHCGKPLNDTRLLALMGELEGRISGSIHYDNVAPCFLGGMQLMIEENGIISQQVPGFDEWLWVLAYPGIKVSTAEARAILPAQYRRQDCIAHGRHLAGFIHACYSRQPQLAAALMKDVIAEPYRARLLPGFSQARQAVSEIGALASGISGSGPTLFALCDKPETAQRVADWLSKHYLQNQEGFVHICRLDTAGARVVG</sequence>